<feature type="chain" id="PRO_0000383575" description="Protein ELYS">
    <location>
        <begin position="1"/>
        <end position="2408"/>
    </location>
</feature>
<feature type="DNA-binding region" description="A.T hook" evidence="6">
    <location>
        <begin position="2329"/>
        <end position="2341"/>
    </location>
</feature>
<feature type="region of interest" description="Seven-bladed beta propeller repeats" evidence="2">
    <location>
        <begin position="1"/>
        <end position="492"/>
    </location>
</feature>
<feature type="region of interest" description="Disordered" evidence="2">
    <location>
        <begin position="1016"/>
        <end position="2408"/>
    </location>
</feature>
<feature type="region of interest" description="Sufficient to block nuclear pore assembly" evidence="6">
    <location>
        <begin position="2281"/>
        <end position="2408"/>
    </location>
</feature>
<feature type="region of interest" description="Sufficient for chromatin-binding" evidence="6">
    <location>
        <begin position="2281"/>
        <end position="2359"/>
    </location>
</feature>
<feature type="region of interest" description="Sufficient for chromatin-binding" evidence="6">
    <location>
        <begin position="2359"/>
        <end position="2408"/>
    </location>
</feature>
<feature type="compositionally biased region" description="Polar residues" evidence="3">
    <location>
        <begin position="1124"/>
        <end position="1145"/>
    </location>
</feature>
<feature type="compositionally biased region" description="Acidic residues" evidence="3">
    <location>
        <begin position="1457"/>
        <end position="1466"/>
    </location>
</feature>
<feature type="compositionally biased region" description="Polar residues" evidence="3">
    <location>
        <begin position="1705"/>
        <end position="1719"/>
    </location>
</feature>
<feature type="compositionally biased region" description="Polar residues" evidence="3">
    <location>
        <begin position="1735"/>
        <end position="1750"/>
    </location>
</feature>
<feature type="compositionally biased region" description="Basic and acidic residues" evidence="3">
    <location>
        <begin position="2136"/>
        <end position="2149"/>
    </location>
</feature>
<feature type="compositionally biased region" description="Basic residues" evidence="3">
    <location>
        <begin position="2331"/>
        <end position="2348"/>
    </location>
</feature>
<feature type="compositionally biased region" description="Basic and acidic residues" evidence="3">
    <location>
        <begin position="2378"/>
        <end position="2389"/>
    </location>
</feature>
<feature type="mutagenesis site" description="Impairs the ability of the C-terminal fragment to block nuclear pore assembly." evidence="6">
    <original>RGR</original>
    <variation>AGA</variation>
    <location>
        <begin position="2332"/>
        <end position="2334"/>
    </location>
</feature>
<evidence type="ECO:0000250" key="1"/>
<evidence type="ECO:0000250" key="2">
    <source>
        <dbReference type="UniProtKB" id="Q8CJF7"/>
    </source>
</evidence>
<evidence type="ECO:0000256" key="3">
    <source>
        <dbReference type="SAM" id="MobiDB-lite"/>
    </source>
</evidence>
<evidence type="ECO:0000269" key="4">
    <source>
    </source>
</evidence>
<evidence type="ECO:0000269" key="5">
    <source>
    </source>
</evidence>
<evidence type="ECO:0000269" key="6">
    <source>
    </source>
</evidence>
<evidence type="ECO:0000305" key="7"/>
<protein>
    <recommendedName>
        <fullName>Protein ELYS</fullName>
    </recommendedName>
    <alternativeName>
        <fullName>Protein MEL-28</fullName>
    </alternativeName>
    <alternativeName>
        <fullName>xELYS</fullName>
    </alternativeName>
</protein>
<comment type="function">
    <text evidence="4 5 6">Required for the assembly of a functional nuclear pore complex (NPC) on the surface of chromosomes as nuclei form at the end of mitosis. May initiate NPC assembly by binding to chromatin and recruiting the Nup107-160 subcomplex, which may in turn recruit membrane vesicles containing pom121 and tmem48/ndc1. Association with chromatin may require the presence of the mcm2-mcm7 complex, suggesting a mechanism for coordination of nuclear assembly and the inactivation of replication licensing.</text>
</comment>
<comment type="subunit">
    <text>Interacts with the Nup107-160 subcomplex of the NPC.</text>
</comment>
<comment type="subcellular location">
    <subcellularLocation>
        <location evidence="4 6">Nucleus</location>
        <location evidence="4 6">Nuclear pore complex</location>
    </subcellularLocation>
    <subcellularLocation>
        <location evidence="2">Cytoplasm</location>
    </subcellularLocation>
    <subcellularLocation>
        <location evidence="4">Nucleus</location>
        <location evidence="4">Nucleoplasm</location>
    </subcellularLocation>
    <text evidence="4 6">Binds to chromatin during mitosis, and chromatin binding increases as nuclei assemble and grows through interphase (PubMed:17235358). Does not localize to the pores of annulate lamellae, which are cytoplasmic stacks of membrane that form in rapidly dividing cells (PubMed:18596237).</text>
</comment>
<comment type="domain">
    <text evidence="1">The N-terminus forms a highly conserved seven-bladed beta propeller decorated with long loops and mediates anchorage to the Nup107-160 subcomplex of the nuclear pore, synergistically with the central alpha domain. The disordered C-terminus is responsible for the interactions with chromatin (By similarity).</text>
</comment>
<comment type="similarity">
    <text evidence="7">Belongs to the ELYS family.</text>
</comment>
<name>ELYS_XENLA</name>
<gene>
    <name type="primary">ahctf1</name>
    <name type="synonym">elys</name>
</gene>
<sequence length="2408" mass="268445">MQNLEAQVTGSLVAFPDVTQKALKEDEINLDSVLRGKFSTGRTSLAWLACGPQLEITNSVTGERISAYHFSGLTERPPVVVAVKEFTWQKKTGLLVGLVEAEGSVLCLYDIGISKVVKAVVLPGSVTAVEPIINHGGASASTQHLHQSLRWFFGVTAVVTDVGHVLLIDLCLDEVSSNQDELDASDLEVMSVIPTKIPKLREAATRERRHLCLQLAAPTGTTVSCLSYISRTNQLAVGYSDGYFSLWNMKTLRRDYHVQIEGGRVPVCAVAFQEPENDPRNCCYLWAVQSSESGGDVSLHLLQLAFSDRKCLASGQIMYELLEYCEERYSLDLSGSTLSLRGQSNNTKLLGCQTIEKFRVHGEREDGVHEVTSPDTSVSVFSWQVNTYGQGKPSVYLGVFDINRWYQAQMPDSLRSGQFLRNCSYFAFWSLEAVVNITTQDIIFDILVHERSLSRGIPPSYPPPEQFYYPSTYNFDATCLLNSGLIHFACTGFQKETLHFLKKSGSSLNEAIPDGYNRCLAAGLLAPKFTDVQASSLSQEEQLQAILAAAVETSSLGLLTSCIKRWTAEEQPRSAANLRFVLEWTWKKVTLTKQEFDRLCFRLFDGSCNFIDPHTLQSLQQCHLYFSNLTAVLNCFIAQAKEVTQQGAVDLTNKQSVTRLLTLYASVVLWFCRSGMLPDSSDETVQLTRPFYNYQVIQQYYSDQRKKLERLARGKWDTSSLMIDGLINQFGDRIQQLWSRDDNGTGKYPPANLHALLDVYLLENADEMSKHAITIYFLLDIMYSFPDKPDSSIESFPTAFFVPGSLIKLIQGFWLLDHNDYQNSVDCILNPASSRVMSWQHSQIIENLLCHGDSRQALRYLQVMKPVATTSKEVKLHMTVLLANRSILEAWNLQRLHSSRLNVEELLKHMYEMCQEMGLIEELLKLTFTDFEQGYLHKFLQTTGVQNQELLLVHHLQRANYISALQLNQSLKTNHLNDCDRRLRERSGARNAILDQYGKILPRVQRTLASERAKPYSLPSLVWREVARPKPLSTTAKQAAPGSIITKANFICNVLSKIKEVSTANEKREEYSPYQSMVSEEPTAPPLQDIDVPDAFFGTPINKSRRVSRLLDSVVHPVLMEPTPLTSSDTDNNQTPHKSPLLKTSSPLHSSLRRIAHMRSFAKASEFSLLETPLVVRKAKALAANTASSGYTSITPQSILRSSVRTTPLVSPSVSPGRSLTPPLRPKETKISFMELSFTRHAKAAHSSEGNLLAISPVLRSSPDAVWSVKGKVASFTQNTPVKKLDEIDASSSGIQEESQDEMEVSKEISNISVRSEQASLEYHDAPTPEDLENDEISGTTNSQPQVNEVHHQMEDGQLTEKPAELALTEMQEEFIDSEEREIEYISAPLNGPNALECMTAVPDIYLEDASQCILETPEGSSVSVTGEQECVSSAKDSESVISIHDSDDAHSNLSENDQDSEEIEENNLRVPTTVTRCEEFDLIETKDLEVELEEADSEKTNYKDIYPDATVQLGFTVESIEQRYTCELADRRETPSETDEIEGEHFETENNFSLVLEGDVTEEEILEPSSSKTDLELTRPPIAHQKLISENRENIENCETTEKIPANMSPLVDSDHESKTLETLPSEADLSVAEKVLKGTEEKDVPPEVHSEVVLESKLVGNAMMSLDSSESQEVIISQYDNVISIEKLEMTQEKMYGEKTEQINEGQVSPNRDQSTLVKPLTPRRSIRKSSKPADSSTDIIGNITLPTTPKRGLKKAKENVDTLKNSISVVPEEELTLGTRRITRKATLTALDNPEPLQIKEPPSGEDLQVQPSTPTRGRRGKVITSDDLKEPPSGEDLQVQPSTPTRGRRGRVITSDDLREPPPGEDLQVQPSTPTRGRRGRVITSDDIKESPSVEDLQVQPSTPTRGRRGKVITSDDIKEPPSVEDLQVQPSTPTRGRKGKVITSDDIKEPLSGEDLQVQPSTPTRGRKGKVITSDDIKEPLSEEVLQEQPSTPTRGRRGRVITSDGKGYECVEEKNALPLTPTRITRSKNILEPEKGISQIEPEKGISQIEPDKGLSQIEDTGETEHEVVTPRRGRRGKRVVNELVKHFERNSSQPNIKADTSPPVSPKKVSLRWTRTRSENQRINATEEQASKIQEDLSDTPRKRYKKSSNKMGFEETTDTVTEGAIVEDVQESLIISHLGKNPNTSIVRSARKTALPPVTEDHSEQPLLPPESHSKVHSSLAIADEENKTNTRTRSGNKSSVDVSAITFEFSTPKARTKKTAKGSAVPTELIPSTQYVFSPPSTRTRRATRANVSEAVIEPQLQFQESCEIAETEVPEVPASKPRGRPPKHKAKAVTRVLKKPSWSTPPVEIKLISPPESPAVSETNTKTDSTEAKGAEKISVRRTRRRIIAKPVTRRKMR</sequence>
<reference key="1">
    <citation type="submission" date="2004-11" db="EMBL/GenBank/DDBJ databases">
        <authorList>
            <consortium name="NIH - Xenopus Gene Collection (XGC) project"/>
        </authorList>
    </citation>
    <scope>NUCLEOTIDE SEQUENCE [LARGE SCALE MRNA]</scope>
    <source>
        <tissue>Oocyte</tissue>
    </source>
</reference>
<reference key="2">
    <citation type="journal article" date="2006" name="Proc. Natl. Acad. Sci. U.S.A.">
        <title>ELYS is a dual nucleoporin/kinetochore protein required for nuclear pore assembly and proper cell division.</title>
        <authorList>
            <person name="Rasala B.A."/>
            <person name="Orjalo A.V."/>
            <person name="Shen Z."/>
            <person name="Briggs S."/>
            <person name="Forbes D.J."/>
        </authorList>
    </citation>
    <scope>IDENTIFICATION BY MASS SPECTROMETRY</scope>
    <scope>ASSOCIATION WITH THE NUP107-160 COMPLEX</scope>
</reference>
<reference key="3">
    <citation type="journal article" date="2007" name="Curr. Biol.">
        <title>ELYS/MEL-28 chromatin association coordinates nuclear pore complex assembly and replication licensing.</title>
        <authorList>
            <person name="Gillespie P.J."/>
            <person name="Khoudoli G.A."/>
            <person name="Stewart G."/>
            <person name="Swedlow J.R."/>
            <person name="Blow J.J."/>
        </authorList>
    </citation>
    <scope>IDENTIFICATION BY MASS SPECTROMETRY</scope>
    <scope>FUNCTION</scope>
    <scope>CHROMATIN-BINDING</scope>
    <scope>ASSOCIATION WITH THE NUP107-160 COMPLEX</scope>
</reference>
<reference key="4">
    <citation type="journal article" date="2007" name="EMBO Rep.">
        <title>MEL-28/ELYS is required for the recruitment of nucleoporins to chromatin and postmitotic nuclear pore complex assembly.</title>
        <authorList>
            <person name="Franz C."/>
            <person name="Walczak R."/>
            <person name="Yavuz S."/>
            <person name="Santarella R."/>
            <person name="Gentzel M."/>
            <person name="Askjaer P."/>
            <person name="Galy V."/>
            <person name="Hetzer M."/>
            <person name="Mattaj I.W."/>
            <person name="Antonin W."/>
        </authorList>
    </citation>
    <scope>FUNCTION</scope>
    <scope>CHROMATIN-BINDING</scope>
    <scope>ASSOCIATION WITH THE NUP107-160 COMPLEX</scope>
    <scope>SUBCELLULAR LOCATION</scope>
</reference>
<reference key="5">
    <citation type="journal article" date="2008" name="Mol. Biol. Cell">
        <title>Capture of AT-rich chromatin by ELYS recruits POM121 and NDC1 to initiate nuclear pore assembly.</title>
        <authorList>
            <person name="Rasala B.A."/>
            <person name="Ramos C."/>
            <person name="Harel A."/>
            <person name="Forbes D.J."/>
        </authorList>
    </citation>
    <scope>FUNCTION</scope>
    <scope>CHROMATIN-BINDING</scope>
    <scope>SUBCELLULAR LOCATION</scope>
    <scope>MUTAGENESIS OF 2332-ARG--ARG-2334</scope>
</reference>
<dbReference type="EMBL" id="BC086281">
    <property type="protein sequence ID" value="AAH86281.1"/>
    <property type="molecule type" value="mRNA"/>
</dbReference>
<dbReference type="RefSeq" id="NP_001081199.1">
    <property type="nucleotide sequence ID" value="NM_001087730.1"/>
</dbReference>
<dbReference type="PDB" id="7VCI">
    <property type="method" value="EM"/>
    <property type="resolution" value="8.10 A"/>
    <property type="chains" value="T=1-2408"/>
</dbReference>
<dbReference type="PDB" id="7WB4">
    <property type="method" value="EM"/>
    <property type="resolution" value="5.60 A"/>
    <property type="chains" value="N/n=1-2408"/>
</dbReference>
<dbReference type="PDBsum" id="7VCI"/>
<dbReference type="PDBsum" id="7WB4"/>
<dbReference type="EMDB" id="EMD-31891"/>
<dbReference type="EMDB" id="EMD-32394"/>
<dbReference type="SMR" id="Q5U249"/>
<dbReference type="BioGRID" id="99047">
    <property type="interactions" value="8"/>
</dbReference>
<dbReference type="IntAct" id="Q5U249">
    <property type="interactions" value="1"/>
</dbReference>
<dbReference type="GeneID" id="397707"/>
<dbReference type="KEGG" id="xla:397707"/>
<dbReference type="AGR" id="Xenbase:XB-GENE-866620"/>
<dbReference type="CTD" id="397707"/>
<dbReference type="Xenbase" id="XB-GENE-866620">
    <property type="gene designation" value="ahctf1.L"/>
</dbReference>
<dbReference type="OrthoDB" id="20729at2759"/>
<dbReference type="Proteomes" id="UP000186698">
    <property type="component" value="Chromosome 5L"/>
</dbReference>
<dbReference type="Bgee" id="397707">
    <property type="expression patterns" value="Expressed in egg cell and 19 other cell types or tissues"/>
</dbReference>
<dbReference type="GO" id="GO:0005737">
    <property type="term" value="C:cytoplasm"/>
    <property type="evidence" value="ECO:0007669"/>
    <property type="project" value="UniProtKB-SubCell"/>
</dbReference>
<dbReference type="GO" id="GO:0005643">
    <property type="term" value="C:nuclear pore"/>
    <property type="evidence" value="ECO:0007669"/>
    <property type="project" value="UniProtKB-SubCell"/>
</dbReference>
<dbReference type="GO" id="GO:0005654">
    <property type="term" value="C:nucleoplasm"/>
    <property type="evidence" value="ECO:0007669"/>
    <property type="project" value="UniProtKB-SubCell"/>
</dbReference>
<dbReference type="GO" id="GO:0003677">
    <property type="term" value="F:DNA binding"/>
    <property type="evidence" value="ECO:0007669"/>
    <property type="project" value="UniProtKB-KW"/>
</dbReference>
<dbReference type="GO" id="GO:0051028">
    <property type="term" value="P:mRNA transport"/>
    <property type="evidence" value="ECO:0007669"/>
    <property type="project" value="UniProtKB-KW"/>
</dbReference>
<dbReference type="GO" id="GO:0015031">
    <property type="term" value="P:protein transport"/>
    <property type="evidence" value="ECO:0007669"/>
    <property type="project" value="UniProtKB-KW"/>
</dbReference>
<dbReference type="InterPro" id="IPR032040">
    <property type="entry name" value="ELYS-bb"/>
</dbReference>
<dbReference type="InterPro" id="IPR052620">
    <property type="entry name" value="ELYS/MEL-28_NucAsmblyFactor"/>
</dbReference>
<dbReference type="InterPro" id="IPR025151">
    <property type="entry name" value="ELYS_dom"/>
</dbReference>
<dbReference type="InterPro" id="IPR011047">
    <property type="entry name" value="Quinoprotein_ADH-like_sf"/>
</dbReference>
<dbReference type="PANTHER" id="PTHR21583">
    <property type="entry name" value="ELYS PROTEIN"/>
    <property type="match status" value="1"/>
</dbReference>
<dbReference type="PANTHER" id="PTHR21583:SF8">
    <property type="entry name" value="PROTEIN ELYS"/>
    <property type="match status" value="1"/>
</dbReference>
<dbReference type="Pfam" id="PF13934">
    <property type="entry name" value="ELYS"/>
    <property type="match status" value="1"/>
</dbReference>
<dbReference type="Pfam" id="PF16687">
    <property type="entry name" value="ELYS-bb"/>
    <property type="match status" value="1"/>
</dbReference>
<dbReference type="SUPFAM" id="SSF50998">
    <property type="entry name" value="Quinoprotein alcohol dehydrogenase-like"/>
    <property type="match status" value="1"/>
</dbReference>
<keyword id="KW-0002">3D-structure</keyword>
<keyword id="KW-0963">Cytoplasm</keyword>
<keyword id="KW-0238">DNA-binding</keyword>
<keyword id="KW-0509">mRNA transport</keyword>
<keyword id="KW-0906">Nuclear pore complex</keyword>
<keyword id="KW-0539">Nucleus</keyword>
<keyword id="KW-0653">Protein transport</keyword>
<keyword id="KW-1185">Reference proteome</keyword>
<keyword id="KW-0811">Translocation</keyword>
<keyword id="KW-0813">Transport</keyword>
<proteinExistence type="evidence at protein level"/>
<accession>Q5U249</accession>
<organism>
    <name type="scientific">Xenopus laevis</name>
    <name type="common">African clawed frog</name>
    <dbReference type="NCBI Taxonomy" id="8355"/>
    <lineage>
        <taxon>Eukaryota</taxon>
        <taxon>Metazoa</taxon>
        <taxon>Chordata</taxon>
        <taxon>Craniata</taxon>
        <taxon>Vertebrata</taxon>
        <taxon>Euteleostomi</taxon>
        <taxon>Amphibia</taxon>
        <taxon>Batrachia</taxon>
        <taxon>Anura</taxon>
        <taxon>Pipoidea</taxon>
        <taxon>Pipidae</taxon>
        <taxon>Xenopodinae</taxon>
        <taxon>Xenopus</taxon>
        <taxon>Xenopus</taxon>
    </lineage>
</organism>